<gene>
    <name evidence="1" type="primary">queA</name>
    <name type="ordered locus">HPP12_0382</name>
</gene>
<sequence>MKEFDLESYDYYLPKELIANYPVLPKEKAKLLVYDRRSQTITHTTFEHVLDFFPKNALVVLNDTKVMKARLFGSKHAFLPSKTTEVFFHRFFKDNTALTQIKGKIKAGDKIFFDENYCAEVLELLHNGQRLIAFYDNQTPLNQENILKLLEQYGHMPLPPYIKRADESLDAHEYQSVFAKHIGAVAAPTASLHFSQHTLEKLLKDFKHAFLTLHVGAGTFLGVETKDIREHQIHTEVLRIPKKSQEILQKSQEILCIGTTALRSVEYFKRLENPNQEAFECDIFLHLANPILHVNYLLTNFHLPKSSLLMLVSAMIGLEKTKEIYKIAIEKKYRFYSYGDGMLIL</sequence>
<feature type="chain" id="PRO_1000094782" description="S-adenosylmethionine:tRNA ribosyltransferase-isomerase">
    <location>
        <begin position="1"/>
        <end position="345"/>
    </location>
</feature>
<organism>
    <name type="scientific">Helicobacter pylori (strain P12)</name>
    <dbReference type="NCBI Taxonomy" id="570508"/>
    <lineage>
        <taxon>Bacteria</taxon>
        <taxon>Pseudomonadati</taxon>
        <taxon>Campylobacterota</taxon>
        <taxon>Epsilonproteobacteria</taxon>
        <taxon>Campylobacterales</taxon>
        <taxon>Helicobacteraceae</taxon>
        <taxon>Helicobacter</taxon>
    </lineage>
</organism>
<keyword id="KW-0963">Cytoplasm</keyword>
<keyword id="KW-0671">Queuosine biosynthesis</keyword>
<keyword id="KW-0949">S-adenosyl-L-methionine</keyword>
<keyword id="KW-0808">Transferase</keyword>
<proteinExistence type="inferred from homology"/>
<dbReference type="EC" id="2.4.99.17" evidence="1"/>
<dbReference type="EMBL" id="CP001217">
    <property type="protein sequence ID" value="ACJ07539.1"/>
    <property type="molecule type" value="Genomic_DNA"/>
</dbReference>
<dbReference type="SMR" id="B6JKW1"/>
<dbReference type="KEGG" id="hpp:HPP12_0382"/>
<dbReference type="HOGENOM" id="CLU_039110_1_0_7"/>
<dbReference type="UniPathway" id="UPA00392"/>
<dbReference type="Proteomes" id="UP000008198">
    <property type="component" value="Chromosome"/>
</dbReference>
<dbReference type="GO" id="GO:0005737">
    <property type="term" value="C:cytoplasm"/>
    <property type="evidence" value="ECO:0007669"/>
    <property type="project" value="UniProtKB-SubCell"/>
</dbReference>
<dbReference type="GO" id="GO:0051075">
    <property type="term" value="F:S-adenosylmethionine:tRNA ribosyltransferase-isomerase activity"/>
    <property type="evidence" value="ECO:0007669"/>
    <property type="project" value="UniProtKB-EC"/>
</dbReference>
<dbReference type="GO" id="GO:0008616">
    <property type="term" value="P:queuosine biosynthetic process"/>
    <property type="evidence" value="ECO:0007669"/>
    <property type="project" value="UniProtKB-UniRule"/>
</dbReference>
<dbReference type="GO" id="GO:0002099">
    <property type="term" value="P:tRNA wobble guanine modification"/>
    <property type="evidence" value="ECO:0007669"/>
    <property type="project" value="TreeGrafter"/>
</dbReference>
<dbReference type="Gene3D" id="2.40.10.240">
    <property type="entry name" value="QueA-like"/>
    <property type="match status" value="1"/>
</dbReference>
<dbReference type="Gene3D" id="3.40.1780.10">
    <property type="entry name" value="QueA-like"/>
    <property type="match status" value="1"/>
</dbReference>
<dbReference type="HAMAP" id="MF_00113">
    <property type="entry name" value="QueA"/>
    <property type="match status" value="1"/>
</dbReference>
<dbReference type="InterPro" id="IPR003699">
    <property type="entry name" value="QueA"/>
</dbReference>
<dbReference type="InterPro" id="IPR042118">
    <property type="entry name" value="QueA_dom1"/>
</dbReference>
<dbReference type="InterPro" id="IPR042119">
    <property type="entry name" value="QueA_dom2"/>
</dbReference>
<dbReference type="InterPro" id="IPR036100">
    <property type="entry name" value="QueA_sf"/>
</dbReference>
<dbReference type="NCBIfam" id="NF001140">
    <property type="entry name" value="PRK00147.1"/>
    <property type="match status" value="1"/>
</dbReference>
<dbReference type="NCBIfam" id="TIGR00113">
    <property type="entry name" value="queA"/>
    <property type="match status" value="1"/>
</dbReference>
<dbReference type="PANTHER" id="PTHR30307">
    <property type="entry name" value="S-ADENOSYLMETHIONINE:TRNA RIBOSYLTRANSFERASE-ISOMERASE"/>
    <property type="match status" value="1"/>
</dbReference>
<dbReference type="PANTHER" id="PTHR30307:SF0">
    <property type="entry name" value="S-ADENOSYLMETHIONINE:TRNA RIBOSYLTRANSFERASE-ISOMERASE"/>
    <property type="match status" value="1"/>
</dbReference>
<dbReference type="Pfam" id="PF02547">
    <property type="entry name" value="Queuosine_synth"/>
    <property type="match status" value="1"/>
</dbReference>
<dbReference type="SUPFAM" id="SSF111337">
    <property type="entry name" value="QueA-like"/>
    <property type="match status" value="1"/>
</dbReference>
<name>QUEA_HELP2</name>
<accession>B6JKW1</accession>
<comment type="function">
    <text evidence="1">Transfers and isomerizes the ribose moiety from AdoMet to the 7-aminomethyl group of 7-deazaguanine (preQ1-tRNA) to give epoxyqueuosine (oQ-tRNA).</text>
</comment>
<comment type="catalytic activity">
    <reaction evidence="1">
        <text>7-aminomethyl-7-carbaguanosine(34) in tRNA + S-adenosyl-L-methionine = epoxyqueuosine(34) in tRNA + adenine + L-methionine + 2 H(+)</text>
        <dbReference type="Rhea" id="RHEA:32155"/>
        <dbReference type="Rhea" id="RHEA-COMP:10342"/>
        <dbReference type="Rhea" id="RHEA-COMP:18582"/>
        <dbReference type="ChEBI" id="CHEBI:15378"/>
        <dbReference type="ChEBI" id="CHEBI:16708"/>
        <dbReference type="ChEBI" id="CHEBI:57844"/>
        <dbReference type="ChEBI" id="CHEBI:59789"/>
        <dbReference type="ChEBI" id="CHEBI:82833"/>
        <dbReference type="ChEBI" id="CHEBI:194443"/>
        <dbReference type="EC" id="2.4.99.17"/>
    </reaction>
</comment>
<comment type="pathway">
    <text evidence="1">tRNA modification; tRNA-queuosine biosynthesis.</text>
</comment>
<comment type="subunit">
    <text evidence="1">Monomer.</text>
</comment>
<comment type="subcellular location">
    <subcellularLocation>
        <location evidence="1">Cytoplasm</location>
    </subcellularLocation>
</comment>
<comment type="similarity">
    <text evidence="1">Belongs to the QueA family.</text>
</comment>
<reference key="1">
    <citation type="submission" date="2008-10" db="EMBL/GenBank/DDBJ databases">
        <title>The complete genome sequence of Helicobacter pylori strain P12.</title>
        <authorList>
            <person name="Fischer W."/>
            <person name="Windhager L."/>
            <person name="Karnholz A."/>
            <person name="Zeiller M."/>
            <person name="Zimmer R."/>
            <person name="Haas R."/>
        </authorList>
    </citation>
    <scope>NUCLEOTIDE SEQUENCE [LARGE SCALE GENOMIC DNA]</scope>
    <source>
        <strain>P12</strain>
    </source>
</reference>
<evidence type="ECO:0000255" key="1">
    <source>
        <dbReference type="HAMAP-Rule" id="MF_00113"/>
    </source>
</evidence>
<protein>
    <recommendedName>
        <fullName evidence="1">S-adenosylmethionine:tRNA ribosyltransferase-isomerase</fullName>
        <ecNumber evidence="1">2.4.99.17</ecNumber>
    </recommendedName>
    <alternativeName>
        <fullName evidence="1">Queuosine biosynthesis protein QueA</fullName>
    </alternativeName>
</protein>